<comment type="function">
    <text evidence="1">Reversibly transfers an adenylyl group from ATP to 4'-phosphopantetheine, yielding dephospho-CoA (dPCoA) and pyrophosphate.</text>
</comment>
<comment type="catalytic activity">
    <reaction evidence="1">
        <text>(R)-4'-phosphopantetheine + ATP + H(+) = 3'-dephospho-CoA + diphosphate</text>
        <dbReference type="Rhea" id="RHEA:19801"/>
        <dbReference type="ChEBI" id="CHEBI:15378"/>
        <dbReference type="ChEBI" id="CHEBI:30616"/>
        <dbReference type="ChEBI" id="CHEBI:33019"/>
        <dbReference type="ChEBI" id="CHEBI:57328"/>
        <dbReference type="ChEBI" id="CHEBI:61723"/>
        <dbReference type="EC" id="2.7.7.3"/>
    </reaction>
</comment>
<comment type="cofactor">
    <cofactor evidence="1">
        <name>Mg(2+)</name>
        <dbReference type="ChEBI" id="CHEBI:18420"/>
    </cofactor>
</comment>
<comment type="pathway">
    <text evidence="1">Cofactor biosynthesis; coenzyme A biosynthesis; CoA from (R)-pantothenate: step 4/5.</text>
</comment>
<comment type="subunit">
    <text evidence="1">Homohexamer.</text>
</comment>
<comment type="subcellular location">
    <subcellularLocation>
        <location evidence="1">Cytoplasm</location>
    </subcellularLocation>
</comment>
<comment type="similarity">
    <text evidence="1">Belongs to the bacterial CoaD family.</text>
</comment>
<gene>
    <name evidence="1" type="primary">coaD</name>
    <name type="ordered locus">FP0654</name>
</gene>
<reference key="1">
    <citation type="journal article" date="2007" name="Nat. Biotechnol.">
        <title>Complete genome sequence of the fish pathogen Flavobacterium psychrophilum.</title>
        <authorList>
            <person name="Duchaud E."/>
            <person name="Boussaha M."/>
            <person name="Loux V."/>
            <person name="Bernardet J.-F."/>
            <person name="Michel C."/>
            <person name="Kerouault B."/>
            <person name="Mondot S."/>
            <person name="Nicolas P."/>
            <person name="Bossy R."/>
            <person name="Caron C."/>
            <person name="Bessieres P."/>
            <person name="Gibrat J.-F."/>
            <person name="Claverol S."/>
            <person name="Dumetz F."/>
            <person name="Le Henaff M."/>
            <person name="Benmansour A."/>
        </authorList>
    </citation>
    <scope>NUCLEOTIDE SEQUENCE [LARGE SCALE GENOMIC DNA]</scope>
    <source>
        <strain>ATCC 49511 / DSM 21280 / CIP 103535 / JIP02/86</strain>
    </source>
</reference>
<evidence type="ECO:0000255" key="1">
    <source>
        <dbReference type="HAMAP-Rule" id="MF_00151"/>
    </source>
</evidence>
<proteinExistence type="inferred from homology"/>
<name>COAD_FLAPJ</name>
<sequence length="151" mass="16998">MRKAIFPGSFDPLTLGHSDIIKRSIPLFDEIIIAIGVNAEKKYMFSLEDRKRFIKETFKDEPSVSVISYEGLTIDLCKKLGADFILRGLRNPADFEFEKAIAHTNRRLSKIETIFLLTAASTSFISSSIVRDVIRNGGDYSVLVPEAVRVK</sequence>
<organism>
    <name type="scientific">Flavobacterium psychrophilum (strain ATCC 49511 / DSM 21280 / CIP 103535 / JIP02/86)</name>
    <dbReference type="NCBI Taxonomy" id="402612"/>
    <lineage>
        <taxon>Bacteria</taxon>
        <taxon>Pseudomonadati</taxon>
        <taxon>Bacteroidota</taxon>
        <taxon>Flavobacteriia</taxon>
        <taxon>Flavobacteriales</taxon>
        <taxon>Flavobacteriaceae</taxon>
        <taxon>Flavobacterium</taxon>
    </lineage>
</organism>
<dbReference type="EC" id="2.7.7.3" evidence="1"/>
<dbReference type="EMBL" id="AM398681">
    <property type="protein sequence ID" value="CAL42759.1"/>
    <property type="molecule type" value="Genomic_DNA"/>
</dbReference>
<dbReference type="RefSeq" id="WP_011962815.1">
    <property type="nucleotide sequence ID" value="NC_009613.3"/>
</dbReference>
<dbReference type="RefSeq" id="YP_001295575.1">
    <property type="nucleotide sequence ID" value="NC_009613.3"/>
</dbReference>
<dbReference type="SMR" id="A6GXD6"/>
<dbReference type="STRING" id="402612.FP0654"/>
<dbReference type="EnsemblBacteria" id="CAL42759">
    <property type="protein sequence ID" value="CAL42759"/>
    <property type="gene ID" value="FP0654"/>
</dbReference>
<dbReference type="GeneID" id="66552665"/>
<dbReference type="KEGG" id="fps:FP0654"/>
<dbReference type="PATRIC" id="fig|402612.5.peg.672"/>
<dbReference type="eggNOG" id="COG0669">
    <property type="taxonomic scope" value="Bacteria"/>
</dbReference>
<dbReference type="HOGENOM" id="CLU_100149_1_1_10"/>
<dbReference type="OrthoDB" id="9806661at2"/>
<dbReference type="UniPathway" id="UPA00241">
    <property type="reaction ID" value="UER00355"/>
</dbReference>
<dbReference type="Proteomes" id="UP000006394">
    <property type="component" value="Chromosome"/>
</dbReference>
<dbReference type="GO" id="GO:0005737">
    <property type="term" value="C:cytoplasm"/>
    <property type="evidence" value="ECO:0007669"/>
    <property type="project" value="UniProtKB-SubCell"/>
</dbReference>
<dbReference type="GO" id="GO:0005524">
    <property type="term" value="F:ATP binding"/>
    <property type="evidence" value="ECO:0007669"/>
    <property type="project" value="UniProtKB-KW"/>
</dbReference>
<dbReference type="GO" id="GO:0004595">
    <property type="term" value="F:pantetheine-phosphate adenylyltransferase activity"/>
    <property type="evidence" value="ECO:0007669"/>
    <property type="project" value="UniProtKB-UniRule"/>
</dbReference>
<dbReference type="GO" id="GO:0015937">
    <property type="term" value="P:coenzyme A biosynthetic process"/>
    <property type="evidence" value="ECO:0007669"/>
    <property type="project" value="UniProtKB-UniRule"/>
</dbReference>
<dbReference type="CDD" id="cd02163">
    <property type="entry name" value="PPAT"/>
    <property type="match status" value="1"/>
</dbReference>
<dbReference type="Gene3D" id="3.40.50.620">
    <property type="entry name" value="HUPs"/>
    <property type="match status" value="1"/>
</dbReference>
<dbReference type="HAMAP" id="MF_00151">
    <property type="entry name" value="PPAT_bact"/>
    <property type="match status" value="1"/>
</dbReference>
<dbReference type="InterPro" id="IPR004821">
    <property type="entry name" value="Cyt_trans-like"/>
</dbReference>
<dbReference type="InterPro" id="IPR001980">
    <property type="entry name" value="PPAT"/>
</dbReference>
<dbReference type="InterPro" id="IPR014729">
    <property type="entry name" value="Rossmann-like_a/b/a_fold"/>
</dbReference>
<dbReference type="NCBIfam" id="TIGR01510">
    <property type="entry name" value="coaD_prev_kdtB"/>
    <property type="match status" value="1"/>
</dbReference>
<dbReference type="NCBIfam" id="TIGR00125">
    <property type="entry name" value="cyt_tran_rel"/>
    <property type="match status" value="1"/>
</dbReference>
<dbReference type="PANTHER" id="PTHR21342">
    <property type="entry name" value="PHOSPHOPANTETHEINE ADENYLYLTRANSFERASE"/>
    <property type="match status" value="1"/>
</dbReference>
<dbReference type="PANTHER" id="PTHR21342:SF1">
    <property type="entry name" value="PHOSPHOPANTETHEINE ADENYLYLTRANSFERASE"/>
    <property type="match status" value="1"/>
</dbReference>
<dbReference type="Pfam" id="PF01467">
    <property type="entry name" value="CTP_transf_like"/>
    <property type="match status" value="1"/>
</dbReference>
<dbReference type="PRINTS" id="PR01020">
    <property type="entry name" value="LPSBIOSNTHSS"/>
</dbReference>
<dbReference type="SUPFAM" id="SSF52374">
    <property type="entry name" value="Nucleotidylyl transferase"/>
    <property type="match status" value="1"/>
</dbReference>
<accession>A6GXD6</accession>
<protein>
    <recommendedName>
        <fullName evidence="1">Phosphopantetheine adenylyltransferase</fullName>
        <ecNumber evidence="1">2.7.7.3</ecNumber>
    </recommendedName>
    <alternativeName>
        <fullName evidence="1">Dephospho-CoA pyrophosphorylase</fullName>
    </alternativeName>
    <alternativeName>
        <fullName evidence="1">Pantetheine-phosphate adenylyltransferase</fullName>
        <shortName evidence="1">PPAT</shortName>
    </alternativeName>
</protein>
<feature type="chain" id="PRO_1000076766" description="Phosphopantetheine adenylyltransferase">
    <location>
        <begin position="1"/>
        <end position="151"/>
    </location>
</feature>
<feature type="binding site" evidence="1">
    <location>
        <begin position="9"/>
        <end position="10"/>
    </location>
    <ligand>
        <name>ATP</name>
        <dbReference type="ChEBI" id="CHEBI:30616"/>
    </ligand>
</feature>
<feature type="binding site" evidence="1">
    <location>
        <position position="9"/>
    </location>
    <ligand>
        <name>substrate</name>
    </ligand>
</feature>
<feature type="binding site" evidence="1">
    <location>
        <position position="17"/>
    </location>
    <ligand>
        <name>ATP</name>
        <dbReference type="ChEBI" id="CHEBI:30616"/>
    </ligand>
</feature>
<feature type="binding site" evidence="1">
    <location>
        <position position="41"/>
    </location>
    <ligand>
        <name>substrate</name>
    </ligand>
</feature>
<feature type="binding site" evidence="1">
    <location>
        <position position="73"/>
    </location>
    <ligand>
        <name>substrate</name>
    </ligand>
</feature>
<feature type="binding site" evidence="1">
    <location>
        <position position="87"/>
    </location>
    <ligand>
        <name>substrate</name>
    </ligand>
</feature>
<feature type="binding site" evidence="1">
    <location>
        <begin position="88"/>
        <end position="90"/>
    </location>
    <ligand>
        <name>ATP</name>
        <dbReference type="ChEBI" id="CHEBI:30616"/>
    </ligand>
</feature>
<feature type="binding site" evidence="1">
    <location>
        <position position="98"/>
    </location>
    <ligand>
        <name>ATP</name>
        <dbReference type="ChEBI" id="CHEBI:30616"/>
    </ligand>
</feature>
<feature type="binding site" evidence="1">
    <location>
        <begin position="122"/>
        <end position="128"/>
    </location>
    <ligand>
        <name>ATP</name>
        <dbReference type="ChEBI" id="CHEBI:30616"/>
    </ligand>
</feature>
<feature type="site" description="Transition state stabilizer" evidence="1">
    <location>
        <position position="17"/>
    </location>
</feature>
<keyword id="KW-0067">ATP-binding</keyword>
<keyword id="KW-0173">Coenzyme A biosynthesis</keyword>
<keyword id="KW-0963">Cytoplasm</keyword>
<keyword id="KW-0460">Magnesium</keyword>
<keyword id="KW-0547">Nucleotide-binding</keyword>
<keyword id="KW-0548">Nucleotidyltransferase</keyword>
<keyword id="KW-1185">Reference proteome</keyword>
<keyword id="KW-0808">Transferase</keyword>